<name>Y289_DESOH</name>
<proteinExistence type="inferred from homology"/>
<comment type="similarity">
    <text evidence="1">Belongs to the UPF0235 family.</text>
</comment>
<organism>
    <name type="scientific">Desulfosudis oleivorans (strain DSM 6200 / JCM 39069 / Hxd3)</name>
    <name type="common">Desulfococcus oleovorans</name>
    <dbReference type="NCBI Taxonomy" id="96561"/>
    <lineage>
        <taxon>Bacteria</taxon>
        <taxon>Pseudomonadati</taxon>
        <taxon>Thermodesulfobacteriota</taxon>
        <taxon>Desulfobacteria</taxon>
        <taxon>Desulfobacterales</taxon>
        <taxon>Desulfosudaceae</taxon>
        <taxon>Desulfosudis</taxon>
    </lineage>
</organism>
<keyword id="KW-1185">Reference proteome</keyword>
<protein>
    <recommendedName>
        <fullName evidence="1">UPF0235 protein Dole_0289</fullName>
    </recommendedName>
</protein>
<gene>
    <name type="ordered locus">Dole_0289</name>
</gene>
<dbReference type="EMBL" id="CP000859">
    <property type="protein sequence ID" value="ABW66099.1"/>
    <property type="molecule type" value="Genomic_DNA"/>
</dbReference>
<dbReference type="RefSeq" id="WP_012173718.1">
    <property type="nucleotide sequence ID" value="NC_009943.1"/>
</dbReference>
<dbReference type="SMR" id="A8ZS81"/>
<dbReference type="STRING" id="96561.Dole_0289"/>
<dbReference type="KEGG" id="dol:Dole_0289"/>
<dbReference type="eggNOG" id="COG1872">
    <property type="taxonomic scope" value="Bacteria"/>
</dbReference>
<dbReference type="HOGENOM" id="CLU_130694_6_0_7"/>
<dbReference type="OrthoDB" id="9800587at2"/>
<dbReference type="Proteomes" id="UP000008561">
    <property type="component" value="Chromosome"/>
</dbReference>
<dbReference type="GO" id="GO:0005737">
    <property type="term" value="C:cytoplasm"/>
    <property type="evidence" value="ECO:0007669"/>
    <property type="project" value="TreeGrafter"/>
</dbReference>
<dbReference type="Gene3D" id="3.30.1200.10">
    <property type="entry name" value="YggU-like"/>
    <property type="match status" value="1"/>
</dbReference>
<dbReference type="HAMAP" id="MF_00634">
    <property type="entry name" value="UPF0235"/>
    <property type="match status" value="1"/>
</dbReference>
<dbReference type="InterPro" id="IPR003746">
    <property type="entry name" value="DUF167"/>
</dbReference>
<dbReference type="InterPro" id="IPR036591">
    <property type="entry name" value="YggU-like_sf"/>
</dbReference>
<dbReference type="NCBIfam" id="TIGR00251">
    <property type="entry name" value="DUF167 family protein"/>
    <property type="match status" value="1"/>
</dbReference>
<dbReference type="PANTHER" id="PTHR13420">
    <property type="entry name" value="UPF0235 PROTEIN C15ORF40"/>
    <property type="match status" value="1"/>
</dbReference>
<dbReference type="PANTHER" id="PTHR13420:SF7">
    <property type="entry name" value="UPF0235 PROTEIN C15ORF40"/>
    <property type="match status" value="1"/>
</dbReference>
<dbReference type="Pfam" id="PF02594">
    <property type="entry name" value="DUF167"/>
    <property type="match status" value="1"/>
</dbReference>
<dbReference type="SMART" id="SM01152">
    <property type="entry name" value="DUF167"/>
    <property type="match status" value="1"/>
</dbReference>
<dbReference type="SUPFAM" id="SSF69786">
    <property type="entry name" value="YggU-like"/>
    <property type="match status" value="1"/>
</dbReference>
<reference key="1">
    <citation type="submission" date="2007-10" db="EMBL/GenBank/DDBJ databases">
        <title>Complete sequence of Desulfococcus oleovorans Hxd3.</title>
        <authorList>
            <consortium name="US DOE Joint Genome Institute"/>
            <person name="Copeland A."/>
            <person name="Lucas S."/>
            <person name="Lapidus A."/>
            <person name="Barry K."/>
            <person name="Glavina del Rio T."/>
            <person name="Dalin E."/>
            <person name="Tice H."/>
            <person name="Pitluck S."/>
            <person name="Kiss H."/>
            <person name="Brettin T."/>
            <person name="Bruce D."/>
            <person name="Detter J.C."/>
            <person name="Han C."/>
            <person name="Schmutz J."/>
            <person name="Larimer F."/>
            <person name="Land M."/>
            <person name="Hauser L."/>
            <person name="Kyrpides N."/>
            <person name="Kim E."/>
            <person name="Wawrik B."/>
            <person name="Richardson P."/>
        </authorList>
    </citation>
    <scope>NUCLEOTIDE SEQUENCE [LARGE SCALE GENOMIC DNA]</scope>
    <source>
        <strain>DSM 6200 / JCM 39069 / Hxd3</strain>
    </source>
</reference>
<sequence>MIPVKEHAHTLCFPLLVAPRSSKNMVVGAHDNALKIKITAPPVDGRANEMCVAFLSRLLGIPKTSITIAAGAASKRKEVCLALSPNAAGKQEAARIKALLAGY</sequence>
<evidence type="ECO:0000255" key="1">
    <source>
        <dbReference type="HAMAP-Rule" id="MF_00634"/>
    </source>
</evidence>
<feature type="chain" id="PRO_1000130677" description="UPF0235 protein Dole_0289">
    <location>
        <begin position="1"/>
        <end position="103"/>
    </location>
</feature>
<accession>A8ZS81</accession>